<accession>Q0BMQ8</accession>
<comment type="function">
    <text evidence="1">Catalyzes the phosphorylation of pantothenate (Pan), the first step in CoA biosynthesis.</text>
</comment>
<comment type="catalytic activity">
    <reaction evidence="1">
        <text>(R)-pantothenate + ATP = (R)-4'-phosphopantothenate + ADP + H(+)</text>
        <dbReference type="Rhea" id="RHEA:16373"/>
        <dbReference type="ChEBI" id="CHEBI:10986"/>
        <dbReference type="ChEBI" id="CHEBI:15378"/>
        <dbReference type="ChEBI" id="CHEBI:29032"/>
        <dbReference type="ChEBI" id="CHEBI:30616"/>
        <dbReference type="ChEBI" id="CHEBI:456216"/>
        <dbReference type="EC" id="2.7.1.33"/>
    </reaction>
</comment>
<comment type="cofactor">
    <cofactor evidence="1">
        <name>NH4(+)</name>
        <dbReference type="ChEBI" id="CHEBI:28938"/>
    </cofactor>
    <cofactor evidence="1">
        <name>K(+)</name>
        <dbReference type="ChEBI" id="CHEBI:29103"/>
    </cofactor>
    <text evidence="1">A monovalent cation. Ammonium or potassium.</text>
</comment>
<comment type="pathway">
    <text evidence="1">Cofactor biosynthesis; coenzyme A biosynthesis; CoA from (R)-pantothenate: step 1/5.</text>
</comment>
<comment type="subunit">
    <text evidence="1">Homodimer.</text>
</comment>
<comment type="subcellular location">
    <subcellularLocation>
        <location evidence="1">Cytoplasm</location>
    </subcellularLocation>
</comment>
<comment type="similarity">
    <text evidence="1">Belongs to the type III pantothenate kinase family.</text>
</comment>
<evidence type="ECO:0000255" key="1">
    <source>
        <dbReference type="HAMAP-Rule" id="MF_01274"/>
    </source>
</evidence>
<protein>
    <recommendedName>
        <fullName evidence="1">Type III pantothenate kinase 1</fullName>
        <ecNumber evidence="1">2.7.1.33</ecNumber>
    </recommendedName>
    <alternativeName>
        <fullName evidence="1">PanK-III 1</fullName>
    </alternativeName>
    <alternativeName>
        <fullName evidence="1">Pantothenic acid kinase 1</fullName>
    </alternativeName>
</protein>
<gene>
    <name evidence="1" type="primary">coaX1</name>
    <name type="ordered locus">FTH_0674</name>
</gene>
<name>COAX1_FRATO</name>
<keyword id="KW-0067">ATP-binding</keyword>
<keyword id="KW-0173">Coenzyme A biosynthesis</keyword>
<keyword id="KW-0963">Cytoplasm</keyword>
<keyword id="KW-0418">Kinase</keyword>
<keyword id="KW-0479">Metal-binding</keyword>
<keyword id="KW-0547">Nucleotide-binding</keyword>
<keyword id="KW-0630">Potassium</keyword>
<keyword id="KW-0808">Transferase</keyword>
<reference key="1">
    <citation type="journal article" date="2006" name="J. Bacteriol.">
        <title>Chromosome rearrangement and diversification of Francisella tularensis revealed by the type B (OSU18) genome sequence.</title>
        <authorList>
            <person name="Petrosino J.F."/>
            <person name="Xiang Q."/>
            <person name="Karpathy S.E."/>
            <person name="Jiang H."/>
            <person name="Yerrapragada S."/>
            <person name="Liu Y."/>
            <person name="Gioia J."/>
            <person name="Hemphill L."/>
            <person name="Gonzalez A."/>
            <person name="Raghavan T.M."/>
            <person name="Uzman A."/>
            <person name="Fox G.E."/>
            <person name="Highlander S."/>
            <person name="Reichard M."/>
            <person name="Morton R.J."/>
            <person name="Clinkenbeard K.D."/>
            <person name="Weinstock G.M."/>
        </authorList>
    </citation>
    <scope>NUCLEOTIDE SEQUENCE [LARGE SCALE GENOMIC DNA]</scope>
    <source>
        <strain>OSU18</strain>
    </source>
</reference>
<dbReference type="EC" id="2.7.1.33" evidence="1"/>
<dbReference type="EMBL" id="CP000437">
    <property type="protein sequence ID" value="ABI82626.1"/>
    <property type="molecule type" value="Genomic_DNA"/>
</dbReference>
<dbReference type="RefSeq" id="WP_003015105.1">
    <property type="nucleotide sequence ID" value="NC_017463.1"/>
</dbReference>
<dbReference type="SMR" id="Q0BMQ8"/>
<dbReference type="KEGG" id="fth:FTH_0674"/>
<dbReference type="UniPathway" id="UPA00241">
    <property type="reaction ID" value="UER00352"/>
</dbReference>
<dbReference type="GO" id="GO:0005737">
    <property type="term" value="C:cytoplasm"/>
    <property type="evidence" value="ECO:0007669"/>
    <property type="project" value="UniProtKB-SubCell"/>
</dbReference>
<dbReference type="GO" id="GO:0005524">
    <property type="term" value="F:ATP binding"/>
    <property type="evidence" value="ECO:0007669"/>
    <property type="project" value="UniProtKB-UniRule"/>
</dbReference>
<dbReference type="GO" id="GO:0046872">
    <property type="term" value="F:metal ion binding"/>
    <property type="evidence" value="ECO:0007669"/>
    <property type="project" value="UniProtKB-KW"/>
</dbReference>
<dbReference type="GO" id="GO:0004594">
    <property type="term" value="F:pantothenate kinase activity"/>
    <property type="evidence" value="ECO:0007669"/>
    <property type="project" value="UniProtKB-UniRule"/>
</dbReference>
<dbReference type="GO" id="GO:0015937">
    <property type="term" value="P:coenzyme A biosynthetic process"/>
    <property type="evidence" value="ECO:0007669"/>
    <property type="project" value="UniProtKB-UniRule"/>
</dbReference>
<dbReference type="CDD" id="cd24015">
    <property type="entry name" value="ASKHA_NBD_PanK-III"/>
    <property type="match status" value="1"/>
</dbReference>
<dbReference type="Gene3D" id="3.30.420.40">
    <property type="match status" value="2"/>
</dbReference>
<dbReference type="HAMAP" id="MF_01274">
    <property type="entry name" value="Pantothen_kinase_3"/>
    <property type="match status" value="1"/>
</dbReference>
<dbReference type="InterPro" id="IPR043129">
    <property type="entry name" value="ATPase_NBD"/>
</dbReference>
<dbReference type="InterPro" id="IPR004619">
    <property type="entry name" value="Type_III_PanK"/>
</dbReference>
<dbReference type="NCBIfam" id="TIGR00671">
    <property type="entry name" value="baf"/>
    <property type="match status" value="1"/>
</dbReference>
<dbReference type="NCBIfam" id="NF009855">
    <property type="entry name" value="PRK13321.1"/>
    <property type="match status" value="1"/>
</dbReference>
<dbReference type="PANTHER" id="PTHR34265">
    <property type="entry name" value="TYPE III PANTOTHENATE KINASE"/>
    <property type="match status" value="1"/>
</dbReference>
<dbReference type="PANTHER" id="PTHR34265:SF1">
    <property type="entry name" value="TYPE III PANTOTHENATE KINASE"/>
    <property type="match status" value="1"/>
</dbReference>
<dbReference type="Pfam" id="PF03309">
    <property type="entry name" value="Pan_kinase"/>
    <property type="match status" value="1"/>
</dbReference>
<dbReference type="SUPFAM" id="SSF53067">
    <property type="entry name" value="Actin-like ATPase domain"/>
    <property type="match status" value="2"/>
</dbReference>
<feature type="chain" id="PRO_0000267532" description="Type III pantothenate kinase 1">
    <location>
        <begin position="1"/>
        <end position="256"/>
    </location>
</feature>
<feature type="active site" description="Proton acceptor" evidence="1">
    <location>
        <position position="109"/>
    </location>
</feature>
<feature type="binding site" evidence="1">
    <location>
        <begin position="6"/>
        <end position="13"/>
    </location>
    <ligand>
        <name>ATP</name>
        <dbReference type="ChEBI" id="CHEBI:30616"/>
    </ligand>
</feature>
<feature type="binding site" evidence="1">
    <location>
        <begin position="107"/>
        <end position="110"/>
    </location>
    <ligand>
        <name>substrate</name>
    </ligand>
</feature>
<feature type="binding site" evidence="1">
    <location>
        <position position="130"/>
    </location>
    <ligand>
        <name>K(+)</name>
        <dbReference type="ChEBI" id="CHEBI:29103"/>
    </ligand>
</feature>
<feature type="binding site" evidence="1">
    <location>
        <position position="133"/>
    </location>
    <ligand>
        <name>ATP</name>
        <dbReference type="ChEBI" id="CHEBI:30616"/>
    </ligand>
</feature>
<feature type="binding site" evidence="1">
    <location>
        <position position="185"/>
    </location>
    <ligand>
        <name>substrate</name>
    </ligand>
</feature>
<proteinExistence type="inferred from homology"/>
<sequence>MIVCIDIGNSHIFGGVFVGDQIKHNFRYPSTTPCTSDTLGIFLLSFFERKKLDIEDIEAVVLSSVVLHLEYSVNSACKKYLGITPLELKPGVKTGLKLDIKNPLDLGADRVANSVAAISLFPSRNIIVVDFGTATTICAISENKTYIGGAILPGINLSMESLSQKTAKLSNVTISHPSSALGKTTISQIQSGLIYGQLGAIKEIINRISQENFIDKPPILIATGGYAHIFEKEQYFDVIISDLLLHGLRIIWQMNK</sequence>
<organism>
    <name type="scientific">Francisella tularensis subsp. holarctica (strain OSU18)</name>
    <dbReference type="NCBI Taxonomy" id="393011"/>
    <lineage>
        <taxon>Bacteria</taxon>
        <taxon>Pseudomonadati</taxon>
        <taxon>Pseudomonadota</taxon>
        <taxon>Gammaproteobacteria</taxon>
        <taxon>Thiotrichales</taxon>
        <taxon>Francisellaceae</taxon>
        <taxon>Francisella</taxon>
    </lineage>
</organism>